<evidence type="ECO:0000250" key="1"/>
<evidence type="ECO:0000255" key="2"/>
<evidence type="ECO:0000256" key="3">
    <source>
        <dbReference type="SAM" id="MobiDB-lite"/>
    </source>
</evidence>
<evidence type="ECO:0000305" key="4"/>
<sequence>MSTVPVVQGAGSSNSAQDISTSSAPLTLKERISNLLSSTAFKVGLVVIGLLLVIATLIFLVSAASFVNAIYLVAIPAILGCVNICVGILSMEGHCSPERWILCKKVLKTSEDIIDDGQINNSNKVFTDERLNAIDGVVESLSRRNSLVDQTQ</sequence>
<name>SRPC_CHLTH</name>
<reference key="1">
    <citation type="journal article" date="1991" name="Infect. Immun.">
        <title>Sequence diversity of the 60-kilodalton protein and of a putative 15-kilodalton protein between the trachoma and lymphogranuloma venereum biovars of Chlamydia trachomatis.</title>
        <authorList>
            <person name="de la Maza L.M."/>
            <person name="Fiedler T.J."/>
            <person name="Carlson E.J."/>
            <person name="Markoff B.A."/>
            <person name="Peterson E.M."/>
        </authorList>
    </citation>
    <scope>NUCLEOTIDE SEQUENCE [GENOMIC DNA]</scope>
    <source>
        <strain>C/TW-3</strain>
    </source>
</reference>
<keyword id="KW-0472">Membrane</keyword>
<keyword id="KW-0812">Transmembrane</keyword>
<keyword id="KW-1133">Transmembrane helix</keyword>
<dbReference type="EMBL" id="X54388">
    <property type="protein sequence ID" value="CAA38258.1"/>
    <property type="molecule type" value="Genomic_DNA"/>
</dbReference>
<dbReference type="PIR" id="F43584">
    <property type="entry name" value="F43584"/>
</dbReference>
<dbReference type="RefSeq" id="WP_011324736.1">
    <property type="nucleotide sequence ID" value="NZ_CP016426.1"/>
</dbReference>
<dbReference type="SMR" id="P26756"/>
<dbReference type="OMA" id="CVNICIG"/>
<dbReference type="GO" id="GO:0019867">
    <property type="term" value="C:outer membrane"/>
    <property type="evidence" value="ECO:0007669"/>
    <property type="project" value="InterPro"/>
</dbReference>
<dbReference type="InterPro" id="IPR008436">
    <property type="entry name" value="CRPA"/>
</dbReference>
<dbReference type="Pfam" id="PF05745">
    <property type="entry name" value="CRPA"/>
    <property type="match status" value="1"/>
</dbReference>
<protein>
    <recommendedName>
        <fullName>Sulfur-rich protein, serovar C</fullName>
    </recommendedName>
    <alternativeName>
        <fullName>15 kDa cysteine-rich outer membrane protein</fullName>
    </alternativeName>
    <alternativeName>
        <fullName>Cysteine-rich protein A</fullName>
    </alternativeName>
</protein>
<proteinExistence type="inferred from homology"/>
<gene>
    <name type="primary">srp</name>
    <name type="synonym">crpA</name>
</gene>
<feature type="chain" id="PRO_0000207122" description="Sulfur-rich protein, serovar C">
    <location>
        <begin position="1"/>
        <end position="152"/>
    </location>
</feature>
<feature type="transmembrane region" description="Helical" evidence="2">
    <location>
        <begin position="43"/>
        <end position="63"/>
    </location>
</feature>
<feature type="transmembrane region" description="Helical" evidence="2">
    <location>
        <begin position="69"/>
        <end position="89"/>
    </location>
</feature>
<feature type="region of interest" description="Disordered" evidence="3">
    <location>
        <begin position="1"/>
        <end position="20"/>
    </location>
</feature>
<organism>
    <name type="scientific">Chlamydia trachomatis</name>
    <dbReference type="NCBI Taxonomy" id="813"/>
    <lineage>
        <taxon>Bacteria</taxon>
        <taxon>Pseudomonadati</taxon>
        <taxon>Chlamydiota</taxon>
        <taxon>Chlamydiia</taxon>
        <taxon>Chlamydiales</taxon>
        <taxon>Chlamydiaceae</taxon>
        <taxon>Chlamydia/Chlamydophila group</taxon>
        <taxon>Chlamydia</taxon>
    </lineage>
</organism>
<accession>P26756</accession>
<comment type="subcellular location">
    <subcellularLocation>
        <location evidence="4">Membrane</location>
        <topology evidence="4">Multi-pass membrane protein</topology>
    </subcellularLocation>
    <text evidence="1">Immunolocalizes to the inclusion membrane, the membrane that surrounds the intracellular parasite. This protein is recognized by CD8+ T-cells in both human and mouse infections, suggesting it gains access to the host cytoplasm.</text>
</comment>